<comment type="catalytic activity">
    <reaction evidence="1">
        <text>tRNA(Cys) + L-cysteine + ATP = L-cysteinyl-tRNA(Cys) + AMP + diphosphate</text>
        <dbReference type="Rhea" id="RHEA:17773"/>
        <dbReference type="Rhea" id="RHEA-COMP:9661"/>
        <dbReference type="Rhea" id="RHEA-COMP:9679"/>
        <dbReference type="ChEBI" id="CHEBI:30616"/>
        <dbReference type="ChEBI" id="CHEBI:33019"/>
        <dbReference type="ChEBI" id="CHEBI:35235"/>
        <dbReference type="ChEBI" id="CHEBI:78442"/>
        <dbReference type="ChEBI" id="CHEBI:78517"/>
        <dbReference type="ChEBI" id="CHEBI:456215"/>
        <dbReference type="EC" id="6.1.1.16"/>
    </reaction>
</comment>
<comment type="cofactor">
    <cofactor evidence="1">
        <name>Zn(2+)</name>
        <dbReference type="ChEBI" id="CHEBI:29105"/>
    </cofactor>
    <text evidence="1">Binds 1 zinc ion per subunit.</text>
</comment>
<comment type="subunit">
    <text evidence="1">Monomer.</text>
</comment>
<comment type="subcellular location">
    <subcellularLocation>
        <location evidence="1">Cytoplasm</location>
    </subcellularLocation>
</comment>
<comment type="similarity">
    <text evidence="1">Belongs to the class-I aminoacyl-tRNA synthetase family.</text>
</comment>
<sequence>MKVYNTLTNKKEEFLTLVPGEVKMYVCGPTVYNFFHIGNARTFVVFDTIRRYLEYRGYKVKFIQNFTDIDDKMIKRANEEGSTVKELGDRFIKEYYKDADDLNIERATKNPRATEFMEEIIKFVSDLIEKGYAYEIDGDVYFSTKKFNSYGKLSGQNLEELQLGARINVDERKKDPMDFAIWKSQKPGEPAWESPWGMGRPGWHIECSCMAYNLLGETIDIHAGGSDLSFPHHENEIAQSEARTGKQFAKYWLHSAFVNVNNQKMSKSLNNFFTAREILEKYDADVLRMFMLSGHYRTQINFSMELLDSTKAALDRLYNSINNLENLLDEVKNEELRDEELEYKNELQKYKEKYIEKMDDDFNTADAISIIFDLIRDVNTNVTIESSKELVKYTLDLIRELGSPLGILQESTKASLEEEIEKLIEERQKARKEKNWALADKIRDNLKERGIVLEDTPQGIRWKQI</sequence>
<accession>A5I7M8</accession>
<accession>A7G8W0</accession>
<evidence type="ECO:0000255" key="1">
    <source>
        <dbReference type="HAMAP-Rule" id="MF_00041"/>
    </source>
</evidence>
<organism>
    <name type="scientific">Clostridium botulinum (strain Hall / ATCC 3502 / NCTC 13319 / Type A)</name>
    <dbReference type="NCBI Taxonomy" id="441771"/>
    <lineage>
        <taxon>Bacteria</taxon>
        <taxon>Bacillati</taxon>
        <taxon>Bacillota</taxon>
        <taxon>Clostridia</taxon>
        <taxon>Eubacteriales</taxon>
        <taxon>Clostridiaceae</taxon>
        <taxon>Clostridium</taxon>
    </lineage>
</organism>
<proteinExistence type="inferred from homology"/>
<dbReference type="EC" id="6.1.1.16" evidence="1"/>
<dbReference type="EMBL" id="CP000727">
    <property type="protein sequence ID" value="ABS38476.1"/>
    <property type="molecule type" value="Genomic_DNA"/>
</dbReference>
<dbReference type="EMBL" id="AM412317">
    <property type="protein sequence ID" value="CAL85063.1"/>
    <property type="molecule type" value="Genomic_DNA"/>
</dbReference>
<dbReference type="RefSeq" id="WP_012048360.1">
    <property type="nucleotide sequence ID" value="NC_009698.1"/>
</dbReference>
<dbReference type="RefSeq" id="YP_001255984.1">
    <property type="nucleotide sequence ID" value="NC_009495.1"/>
</dbReference>
<dbReference type="RefSeq" id="YP_001389225.1">
    <property type="nucleotide sequence ID" value="NC_009698.1"/>
</dbReference>
<dbReference type="SMR" id="A5I7M8"/>
<dbReference type="GeneID" id="5187627"/>
<dbReference type="KEGG" id="cbh:CLC_3450"/>
<dbReference type="KEGG" id="cbo:CBO3501"/>
<dbReference type="PATRIC" id="fig|413999.7.peg.3479"/>
<dbReference type="HOGENOM" id="CLU_013528_0_1_9"/>
<dbReference type="PRO" id="PR:A5I7M8"/>
<dbReference type="Proteomes" id="UP000001986">
    <property type="component" value="Chromosome"/>
</dbReference>
<dbReference type="GO" id="GO:0005737">
    <property type="term" value="C:cytoplasm"/>
    <property type="evidence" value="ECO:0000318"/>
    <property type="project" value="GO_Central"/>
</dbReference>
<dbReference type="GO" id="GO:0005829">
    <property type="term" value="C:cytosol"/>
    <property type="evidence" value="ECO:0000318"/>
    <property type="project" value="GO_Central"/>
</dbReference>
<dbReference type="GO" id="GO:0005524">
    <property type="term" value="F:ATP binding"/>
    <property type="evidence" value="ECO:0000318"/>
    <property type="project" value="GO_Central"/>
</dbReference>
<dbReference type="GO" id="GO:0004817">
    <property type="term" value="F:cysteine-tRNA ligase activity"/>
    <property type="evidence" value="ECO:0000318"/>
    <property type="project" value="GO_Central"/>
</dbReference>
<dbReference type="GO" id="GO:0008270">
    <property type="term" value="F:zinc ion binding"/>
    <property type="evidence" value="ECO:0007669"/>
    <property type="project" value="UniProtKB-UniRule"/>
</dbReference>
<dbReference type="GO" id="GO:0006423">
    <property type="term" value="P:cysteinyl-tRNA aminoacylation"/>
    <property type="evidence" value="ECO:0000318"/>
    <property type="project" value="GO_Central"/>
</dbReference>
<dbReference type="CDD" id="cd00672">
    <property type="entry name" value="CysRS_core"/>
    <property type="match status" value="1"/>
</dbReference>
<dbReference type="FunFam" id="3.40.50.620:FF:000009">
    <property type="entry name" value="Cysteine--tRNA ligase"/>
    <property type="match status" value="1"/>
</dbReference>
<dbReference type="Gene3D" id="1.20.120.1910">
    <property type="entry name" value="Cysteine-tRNA ligase, C-terminal anti-codon recognition domain"/>
    <property type="match status" value="1"/>
</dbReference>
<dbReference type="Gene3D" id="3.40.50.620">
    <property type="entry name" value="HUPs"/>
    <property type="match status" value="1"/>
</dbReference>
<dbReference type="HAMAP" id="MF_00041">
    <property type="entry name" value="Cys_tRNA_synth"/>
    <property type="match status" value="1"/>
</dbReference>
<dbReference type="InterPro" id="IPR015803">
    <property type="entry name" value="Cys-tRNA-ligase"/>
</dbReference>
<dbReference type="InterPro" id="IPR015273">
    <property type="entry name" value="Cys-tRNA-synt_Ia_DALR"/>
</dbReference>
<dbReference type="InterPro" id="IPR024909">
    <property type="entry name" value="Cys-tRNA/MSH_ligase"/>
</dbReference>
<dbReference type="InterPro" id="IPR056411">
    <property type="entry name" value="CysS_C"/>
</dbReference>
<dbReference type="InterPro" id="IPR014729">
    <property type="entry name" value="Rossmann-like_a/b/a_fold"/>
</dbReference>
<dbReference type="InterPro" id="IPR032678">
    <property type="entry name" value="tRNA-synt_1_cat_dom"/>
</dbReference>
<dbReference type="InterPro" id="IPR009080">
    <property type="entry name" value="tRNAsynth_Ia_anticodon-bd"/>
</dbReference>
<dbReference type="NCBIfam" id="TIGR00435">
    <property type="entry name" value="cysS"/>
    <property type="match status" value="1"/>
</dbReference>
<dbReference type="PANTHER" id="PTHR10890:SF3">
    <property type="entry name" value="CYSTEINE--TRNA LIGASE, CYTOPLASMIC"/>
    <property type="match status" value="1"/>
</dbReference>
<dbReference type="PANTHER" id="PTHR10890">
    <property type="entry name" value="CYSTEINYL-TRNA SYNTHETASE"/>
    <property type="match status" value="1"/>
</dbReference>
<dbReference type="Pfam" id="PF23493">
    <property type="entry name" value="CysS_C"/>
    <property type="match status" value="1"/>
</dbReference>
<dbReference type="Pfam" id="PF09190">
    <property type="entry name" value="DALR_2"/>
    <property type="match status" value="1"/>
</dbReference>
<dbReference type="Pfam" id="PF01406">
    <property type="entry name" value="tRNA-synt_1e"/>
    <property type="match status" value="1"/>
</dbReference>
<dbReference type="PRINTS" id="PR00983">
    <property type="entry name" value="TRNASYNTHCYS"/>
</dbReference>
<dbReference type="SMART" id="SM00840">
    <property type="entry name" value="DALR_2"/>
    <property type="match status" value="1"/>
</dbReference>
<dbReference type="SUPFAM" id="SSF47323">
    <property type="entry name" value="Anticodon-binding domain of a subclass of class I aminoacyl-tRNA synthetases"/>
    <property type="match status" value="1"/>
</dbReference>
<dbReference type="SUPFAM" id="SSF52374">
    <property type="entry name" value="Nucleotidylyl transferase"/>
    <property type="match status" value="1"/>
</dbReference>
<gene>
    <name evidence="1" type="primary">cysS</name>
    <name type="ordered locus">CBO3501</name>
    <name type="ordered locus">CLC_3450</name>
</gene>
<name>SYC_CLOBH</name>
<keyword id="KW-0030">Aminoacyl-tRNA synthetase</keyword>
<keyword id="KW-0067">ATP-binding</keyword>
<keyword id="KW-0963">Cytoplasm</keyword>
<keyword id="KW-0436">Ligase</keyword>
<keyword id="KW-0479">Metal-binding</keyword>
<keyword id="KW-0547">Nucleotide-binding</keyword>
<keyword id="KW-0648">Protein biosynthesis</keyword>
<keyword id="KW-1185">Reference proteome</keyword>
<keyword id="KW-0862">Zinc</keyword>
<reference key="1">
    <citation type="journal article" date="2007" name="Genome Res.">
        <title>Genome sequence of a proteolytic (Group I) Clostridium botulinum strain Hall A and comparative analysis of the clostridial genomes.</title>
        <authorList>
            <person name="Sebaihia M."/>
            <person name="Peck M.W."/>
            <person name="Minton N.P."/>
            <person name="Thomson N.R."/>
            <person name="Holden M.T.G."/>
            <person name="Mitchell W.J."/>
            <person name="Carter A.T."/>
            <person name="Bentley S.D."/>
            <person name="Mason D.R."/>
            <person name="Crossman L."/>
            <person name="Paul C.J."/>
            <person name="Ivens A."/>
            <person name="Wells-Bennik M.H.J."/>
            <person name="Davis I.J."/>
            <person name="Cerdeno-Tarraga A.M."/>
            <person name="Churcher C."/>
            <person name="Quail M.A."/>
            <person name="Chillingworth T."/>
            <person name="Feltwell T."/>
            <person name="Fraser A."/>
            <person name="Goodhead I."/>
            <person name="Hance Z."/>
            <person name="Jagels K."/>
            <person name="Larke N."/>
            <person name="Maddison M."/>
            <person name="Moule S."/>
            <person name="Mungall K."/>
            <person name="Norbertczak H."/>
            <person name="Rabbinowitsch E."/>
            <person name="Sanders M."/>
            <person name="Simmonds M."/>
            <person name="White B."/>
            <person name="Whithead S."/>
            <person name="Parkhill J."/>
        </authorList>
    </citation>
    <scope>NUCLEOTIDE SEQUENCE [LARGE SCALE GENOMIC DNA]</scope>
    <source>
        <strain>Hall / ATCC 3502 / NCTC 13319 / Type A</strain>
    </source>
</reference>
<reference key="2">
    <citation type="journal article" date="2007" name="PLoS ONE">
        <title>Analysis of the neurotoxin complex genes in Clostridium botulinum A1-A4 and B1 strains: BoNT/A3, /Ba4 and /B1 clusters are located within plasmids.</title>
        <authorList>
            <person name="Smith T.J."/>
            <person name="Hill K.K."/>
            <person name="Foley B.T."/>
            <person name="Detter J.C."/>
            <person name="Munk A.C."/>
            <person name="Bruce D.C."/>
            <person name="Doggett N.A."/>
            <person name="Smith L.A."/>
            <person name="Marks J.D."/>
            <person name="Xie G."/>
            <person name="Brettin T.S."/>
        </authorList>
    </citation>
    <scope>NUCLEOTIDE SEQUENCE [LARGE SCALE GENOMIC DNA]</scope>
    <source>
        <strain>Hall / ATCC 3502 / NCTC 13319 / Type A</strain>
    </source>
</reference>
<feature type="chain" id="PRO_0000332802" description="Cysteine--tRNA ligase">
    <location>
        <begin position="1"/>
        <end position="465"/>
    </location>
</feature>
<feature type="short sequence motif" description="'HIGH' region">
    <location>
        <begin position="29"/>
        <end position="39"/>
    </location>
</feature>
<feature type="short sequence motif" description="'KMSKS' region">
    <location>
        <begin position="264"/>
        <end position="268"/>
    </location>
</feature>
<feature type="binding site" evidence="1">
    <location>
        <position position="27"/>
    </location>
    <ligand>
        <name>Zn(2+)</name>
        <dbReference type="ChEBI" id="CHEBI:29105"/>
    </ligand>
</feature>
<feature type="binding site" evidence="1">
    <location>
        <position position="207"/>
    </location>
    <ligand>
        <name>Zn(2+)</name>
        <dbReference type="ChEBI" id="CHEBI:29105"/>
    </ligand>
</feature>
<feature type="binding site" evidence="1">
    <location>
        <position position="232"/>
    </location>
    <ligand>
        <name>Zn(2+)</name>
        <dbReference type="ChEBI" id="CHEBI:29105"/>
    </ligand>
</feature>
<feature type="binding site" evidence="1">
    <location>
        <position position="236"/>
    </location>
    <ligand>
        <name>Zn(2+)</name>
        <dbReference type="ChEBI" id="CHEBI:29105"/>
    </ligand>
</feature>
<feature type="binding site" evidence="1">
    <location>
        <position position="267"/>
    </location>
    <ligand>
        <name>ATP</name>
        <dbReference type="ChEBI" id="CHEBI:30616"/>
    </ligand>
</feature>
<protein>
    <recommendedName>
        <fullName evidence="1">Cysteine--tRNA ligase</fullName>
        <ecNumber evidence="1">6.1.1.16</ecNumber>
    </recommendedName>
    <alternativeName>
        <fullName evidence="1">Cysteinyl-tRNA synthetase</fullName>
        <shortName evidence="1">CysRS</shortName>
    </alternativeName>
</protein>